<keyword id="KW-0687">Ribonucleoprotein</keyword>
<keyword id="KW-0689">Ribosomal protein</keyword>
<comment type="similarity">
    <text evidence="2">Belongs to the bacterial ribosomal protein bS21 family.</text>
</comment>
<reference key="1">
    <citation type="journal article" date="2004" name="Proc. Natl. Acad. Sci. U.S.A.">
        <title>Insights into the evolution of Yersinia pestis through whole-genome comparison with Yersinia pseudotuberculosis.</title>
        <authorList>
            <person name="Chain P.S.G."/>
            <person name="Carniel E."/>
            <person name="Larimer F.W."/>
            <person name="Lamerdin J."/>
            <person name="Stoutland P.O."/>
            <person name="Regala W.M."/>
            <person name="Georgescu A.M."/>
            <person name="Vergez L.M."/>
            <person name="Land M.L."/>
            <person name="Motin V.L."/>
            <person name="Brubaker R.R."/>
            <person name="Fowler J."/>
            <person name="Hinnebusch J."/>
            <person name="Marceau M."/>
            <person name="Medigue C."/>
            <person name="Simonet M."/>
            <person name="Chenal-Francisque V."/>
            <person name="Souza B."/>
            <person name="Dacheux D."/>
            <person name="Elliott J.M."/>
            <person name="Derbise A."/>
            <person name="Hauser L.J."/>
            <person name="Garcia E."/>
        </authorList>
    </citation>
    <scope>NUCLEOTIDE SEQUENCE [LARGE SCALE GENOMIC DNA]</scope>
    <source>
        <strain>IP32953</strain>
    </source>
</reference>
<evidence type="ECO:0000250" key="1"/>
<evidence type="ECO:0000255" key="2">
    <source>
        <dbReference type="HAMAP-Rule" id="MF_00358"/>
    </source>
</evidence>
<evidence type="ECO:0000256" key="3">
    <source>
        <dbReference type="SAM" id="MobiDB-lite"/>
    </source>
</evidence>
<evidence type="ECO:0000305" key="4"/>
<organism>
    <name type="scientific">Yersinia pseudotuberculosis serotype I (strain IP32953)</name>
    <dbReference type="NCBI Taxonomy" id="273123"/>
    <lineage>
        <taxon>Bacteria</taxon>
        <taxon>Pseudomonadati</taxon>
        <taxon>Pseudomonadota</taxon>
        <taxon>Gammaproteobacteria</taxon>
        <taxon>Enterobacterales</taxon>
        <taxon>Yersiniaceae</taxon>
        <taxon>Yersinia</taxon>
    </lineage>
</organism>
<feature type="initiator methionine" description="Removed" evidence="1">
    <location>
        <position position="1"/>
    </location>
</feature>
<feature type="chain" id="PRO_0000178410" description="Small ribosomal subunit protein bS21">
    <location>
        <begin position="2"/>
        <end position="71"/>
    </location>
</feature>
<feature type="region of interest" description="Disordered" evidence="3">
    <location>
        <begin position="43"/>
        <end position="71"/>
    </location>
</feature>
<feature type="compositionally biased region" description="Basic residues" evidence="3">
    <location>
        <begin position="46"/>
        <end position="59"/>
    </location>
</feature>
<feature type="compositionally biased region" description="Basic and acidic residues" evidence="3">
    <location>
        <begin position="60"/>
        <end position="71"/>
    </location>
</feature>
<name>RS21_YERPS</name>
<proteinExistence type="inferred from homology"/>
<gene>
    <name evidence="2" type="primary">rpsU</name>
    <name type="ordered locus">YPTB3416</name>
</gene>
<sequence>MPVIKVRENEPFDVALRRFKRSCEKAGVLAEVRRREFYEKPTTERKRAKASAVKRHAKKLARENARRTRLY</sequence>
<accession>Q665U4</accession>
<protein>
    <recommendedName>
        <fullName evidence="2">Small ribosomal subunit protein bS21</fullName>
    </recommendedName>
    <alternativeName>
        <fullName evidence="4">30S ribosomal protein S21</fullName>
    </alternativeName>
</protein>
<dbReference type="EMBL" id="BX936398">
    <property type="protein sequence ID" value="CAH22654.1"/>
    <property type="molecule type" value="Genomic_DNA"/>
</dbReference>
<dbReference type="RefSeq" id="WP_001144069.1">
    <property type="nucleotide sequence ID" value="NZ_CP009712.1"/>
</dbReference>
<dbReference type="SMR" id="Q665U4"/>
<dbReference type="GeneID" id="98390195"/>
<dbReference type="KEGG" id="ypo:BZ17_3192"/>
<dbReference type="KEGG" id="yps:YPTB3416"/>
<dbReference type="PATRIC" id="fig|273123.14.peg.3343"/>
<dbReference type="Proteomes" id="UP000001011">
    <property type="component" value="Chromosome"/>
</dbReference>
<dbReference type="GO" id="GO:1990904">
    <property type="term" value="C:ribonucleoprotein complex"/>
    <property type="evidence" value="ECO:0007669"/>
    <property type="project" value="UniProtKB-KW"/>
</dbReference>
<dbReference type="GO" id="GO:0005840">
    <property type="term" value="C:ribosome"/>
    <property type="evidence" value="ECO:0007669"/>
    <property type="project" value="UniProtKB-KW"/>
</dbReference>
<dbReference type="GO" id="GO:0003735">
    <property type="term" value="F:structural constituent of ribosome"/>
    <property type="evidence" value="ECO:0007669"/>
    <property type="project" value="InterPro"/>
</dbReference>
<dbReference type="GO" id="GO:0006412">
    <property type="term" value="P:translation"/>
    <property type="evidence" value="ECO:0007669"/>
    <property type="project" value="UniProtKB-UniRule"/>
</dbReference>
<dbReference type="FunFam" id="1.20.5.1150:FF:000001">
    <property type="entry name" value="30S ribosomal protein S21"/>
    <property type="match status" value="1"/>
</dbReference>
<dbReference type="Gene3D" id="1.20.5.1150">
    <property type="entry name" value="Ribosomal protein S8"/>
    <property type="match status" value="1"/>
</dbReference>
<dbReference type="HAMAP" id="MF_00358">
    <property type="entry name" value="Ribosomal_bS21"/>
    <property type="match status" value="1"/>
</dbReference>
<dbReference type="InterPro" id="IPR001911">
    <property type="entry name" value="Ribosomal_bS21"/>
</dbReference>
<dbReference type="InterPro" id="IPR018278">
    <property type="entry name" value="Ribosomal_bS21_CS"/>
</dbReference>
<dbReference type="InterPro" id="IPR038380">
    <property type="entry name" value="Ribosomal_bS21_sf"/>
</dbReference>
<dbReference type="NCBIfam" id="TIGR00030">
    <property type="entry name" value="S21p"/>
    <property type="match status" value="1"/>
</dbReference>
<dbReference type="PANTHER" id="PTHR21109">
    <property type="entry name" value="MITOCHONDRIAL 28S RIBOSOMAL PROTEIN S21"/>
    <property type="match status" value="1"/>
</dbReference>
<dbReference type="PANTHER" id="PTHR21109:SF22">
    <property type="entry name" value="SMALL RIBOSOMAL SUBUNIT PROTEIN BS21"/>
    <property type="match status" value="1"/>
</dbReference>
<dbReference type="Pfam" id="PF01165">
    <property type="entry name" value="Ribosomal_S21"/>
    <property type="match status" value="1"/>
</dbReference>
<dbReference type="PRINTS" id="PR00976">
    <property type="entry name" value="RIBOSOMALS21"/>
</dbReference>
<dbReference type="PROSITE" id="PS01181">
    <property type="entry name" value="RIBOSOMAL_S21"/>
    <property type="match status" value="1"/>
</dbReference>